<protein>
    <recommendedName>
        <fullName evidence="1">NADPH-dependent 7-cyano-7-deazaguanine reductase</fullName>
        <ecNumber evidence="1">1.7.1.13</ecNumber>
    </recommendedName>
    <alternativeName>
        <fullName evidence="1">7-cyano-7-carbaguanine reductase</fullName>
    </alternativeName>
    <alternativeName>
        <fullName evidence="1">NADPH-dependent nitrile oxidoreductase</fullName>
    </alternativeName>
    <alternativeName>
        <fullName evidence="1">PreQ(0) reductase</fullName>
    </alternativeName>
</protein>
<name>QUEF_BORA1</name>
<sequence>MPLSDAPLGHNVAYPSEYNAALLFPIARAENRAGLGLDGALPFDGTDIWNAYELSWLDAKGKPRIAMASFRIPASSPNIIESKSFKLYLNSFNQTRLPNAQTLRDLLEKDLSAAAGAPVDMDFILPQRFDTLRIQELSGINLDKLDVEVDRYEPAPELLGCTGTGIIEETLMSRLLKSNCPVTGQPDWASVQIAYRGRPIDRAGLLKYIISFRQHAEFHEHCVERIFCDLMQACQPEQLTVYARYTRRGGLDINPWRSNAGASAPADLRGARQ</sequence>
<evidence type="ECO:0000255" key="1">
    <source>
        <dbReference type="HAMAP-Rule" id="MF_00817"/>
    </source>
</evidence>
<dbReference type="EC" id="1.7.1.13" evidence="1"/>
<dbReference type="EMBL" id="AM167904">
    <property type="protein sequence ID" value="CAJ50063.1"/>
    <property type="molecule type" value="Genomic_DNA"/>
</dbReference>
<dbReference type="RefSeq" id="WP_012418112.1">
    <property type="nucleotide sequence ID" value="NC_010645.1"/>
</dbReference>
<dbReference type="SMR" id="Q2KXN2"/>
<dbReference type="STRING" id="360910.BAV2453"/>
<dbReference type="KEGG" id="bav:BAV2453"/>
<dbReference type="eggNOG" id="COG0780">
    <property type="taxonomic scope" value="Bacteria"/>
</dbReference>
<dbReference type="eggNOG" id="COG2904">
    <property type="taxonomic scope" value="Bacteria"/>
</dbReference>
<dbReference type="HOGENOM" id="CLU_054738_0_0_4"/>
<dbReference type="OrthoDB" id="9789995at2"/>
<dbReference type="UniPathway" id="UPA00392"/>
<dbReference type="Proteomes" id="UP000001977">
    <property type="component" value="Chromosome"/>
</dbReference>
<dbReference type="GO" id="GO:0005737">
    <property type="term" value="C:cytoplasm"/>
    <property type="evidence" value="ECO:0007669"/>
    <property type="project" value="UniProtKB-SubCell"/>
</dbReference>
<dbReference type="GO" id="GO:0033739">
    <property type="term" value="F:preQ1 synthase activity"/>
    <property type="evidence" value="ECO:0007669"/>
    <property type="project" value="UniProtKB-UniRule"/>
</dbReference>
<dbReference type="GO" id="GO:0008616">
    <property type="term" value="P:queuosine biosynthetic process"/>
    <property type="evidence" value="ECO:0007669"/>
    <property type="project" value="UniProtKB-UniRule"/>
</dbReference>
<dbReference type="GO" id="GO:0006400">
    <property type="term" value="P:tRNA modification"/>
    <property type="evidence" value="ECO:0007669"/>
    <property type="project" value="UniProtKB-UniRule"/>
</dbReference>
<dbReference type="Gene3D" id="3.30.1130.10">
    <property type="match status" value="2"/>
</dbReference>
<dbReference type="HAMAP" id="MF_00817">
    <property type="entry name" value="QueF_type2"/>
    <property type="match status" value="1"/>
</dbReference>
<dbReference type="InterPro" id="IPR043133">
    <property type="entry name" value="GTP-CH-I_C/QueF"/>
</dbReference>
<dbReference type="InterPro" id="IPR050084">
    <property type="entry name" value="NADPH_dep_7-cyano-7-deazaG_red"/>
</dbReference>
<dbReference type="InterPro" id="IPR029500">
    <property type="entry name" value="QueF"/>
</dbReference>
<dbReference type="InterPro" id="IPR029139">
    <property type="entry name" value="QueF_N"/>
</dbReference>
<dbReference type="InterPro" id="IPR016428">
    <property type="entry name" value="QueF_type2"/>
</dbReference>
<dbReference type="NCBIfam" id="TIGR03138">
    <property type="entry name" value="QueF"/>
    <property type="match status" value="1"/>
</dbReference>
<dbReference type="PANTHER" id="PTHR34354">
    <property type="entry name" value="NADPH-DEPENDENT 7-CYANO-7-DEAZAGUANINE REDUCTASE"/>
    <property type="match status" value="1"/>
</dbReference>
<dbReference type="PANTHER" id="PTHR34354:SF1">
    <property type="entry name" value="NADPH-DEPENDENT 7-CYANO-7-DEAZAGUANINE REDUCTASE"/>
    <property type="match status" value="1"/>
</dbReference>
<dbReference type="Pfam" id="PF14489">
    <property type="entry name" value="QueF"/>
    <property type="match status" value="1"/>
</dbReference>
<dbReference type="Pfam" id="PF14819">
    <property type="entry name" value="QueF_N"/>
    <property type="match status" value="1"/>
</dbReference>
<dbReference type="PIRSF" id="PIRSF004750">
    <property type="entry name" value="Nitrile_oxidored_YqcD_prd"/>
    <property type="match status" value="1"/>
</dbReference>
<dbReference type="SUPFAM" id="SSF55620">
    <property type="entry name" value="Tetrahydrobiopterin biosynthesis enzymes-like"/>
    <property type="match status" value="1"/>
</dbReference>
<organism>
    <name type="scientific">Bordetella avium (strain 197N)</name>
    <dbReference type="NCBI Taxonomy" id="360910"/>
    <lineage>
        <taxon>Bacteria</taxon>
        <taxon>Pseudomonadati</taxon>
        <taxon>Pseudomonadota</taxon>
        <taxon>Betaproteobacteria</taxon>
        <taxon>Burkholderiales</taxon>
        <taxon>Alcaligenaceae</taxon>
        <taxon>Bordetella</taxon>
    </lineage>
</organism>
<comment type="function">
    <text evidence="1">Catalyzes the NADPH-dependent reduction of 7-cyano-7-deazaguanine (preQ0) to 7-aminomethyl-7-deazaguanine (preQ1).</text>
</comment>
<comment type="catalytic activity">
    <reaction evidence="1">
        <text>7-aminomethyl-7-carbaguanine + 2 NADP(+) = 7-cyano-7-deazaguanine + 2 NADPH + 3 H(+)</text>
        <dbReference type="Rhea" id="RHEA:13409"/>
        <dbReference type="ChEBI" id="CHEBI:15378"/>
        <dbReference type="ChEBI" id="CHEBI:45075"/>
        <dbReference type="ChEBI" id="CHEBI:57783"/>
        <dbReference type="ChEBI" id="CHEBI:58349"/>
        <dbReference type="ChEBI" id="CHEBI:58703"/>
        <dbReference type="EC" id="1.7.1.13"/>
    </reaction>
</comment>
<comment type="pathway">
    <text evidence="1">tRNA modification; tRNA-queuosine biosynthesis.</text>
</comment>
<comment type="subunit">
    <text evidence="1">Homodimer.</text>
</comment>
<comment type="subcellular location">
    <subcellularLocation>
        <location evidence="1">Cytoplasm</location>
    </subcellularLocation>
</comment>
<comment type="similarity">
    <text evidence="1">Belongs to the GTP cyclohydrolase I family. QueF type 2 subfamily.</text>
</comment>
<keyword id="KW-0963">Cytoplasm</keyword>
<keyword id="KW-0521">NADP</keyword>
<keyword id="KW-0560">Oxidoreductase</keyword>
<keyword id="KW-0671">Queuosine biosynthesis</keyword>
<keyword id="KW-1185">Reference proteome</keyword>
<reference key="1">
    <citation type="journal article" date="2006" name="J. Bacteriol.">
        <title>Comparison of the genome sequence of the poultry pathogen Bordetella avium with those of B. bronchiseptica, B. pertussis, and B. parapertussis reveals extensive diversity in surface structures associated with host interaction.</title>
        <authorList>
            <person name="Sebaihia M."/>
            <person name="Preston A."/>
            <person name="Maskell D.J."/>
            <person name="Kuzmiak H."/>
            <person name="Connell T.D."/>
            <person name="King N.D."/>
            <person name="Orndorff P.E."/>
            <person name="Miyamoto D.M."/>
            <person name="Thomson N.R."/>
            <person name="Harris D."/>
            <person name="Goble A."/>
            <person name="Lord A."/>
            <person name="Murphy L."/>
            <person name="Quail M.A."/>
            <person name="Rutter S."/>
            <person name="Squares R."/>
            <person name="Squares S."/>
            <person name="Woodward J."/>
            <person name="Parkhill J."/>
            <person name="Temple L.M."/>
        </authorList>
    </citation>
    <scope>NUCLEOTIDE SEQUENCE [LARGE SCALE GENOMIC DNA]</scope>
    <source>
        <strain>197N</strain>
    </source>
</reference>
<accession>Q2KXN2</accession>
<gene>
    <name evidence="1" type="primary">queF</name>
    <name type="ordered locus">BAV2453</name>
</gene>
<feature type="chain" id="PRO_0000247703" description="NADPH-dependent 7-cyano-7-deazaguanine reductase">
    <location>
        <begin position="1"/>
        <end position="273"/>
    </location>
</feature>
<feature type="active site" description="Thioimide intermediate" evidence="1">
    <location>
        <position position="180"/>
    </location>
</feature>
<feature type="active site" description="Proton donor" evidence="1">
    <location>
        <position position="187"/>
    </location>
</feature>
<feature type="binding site" evidence="1">
    <location>
        <begin position="80"/>
        <end position="82"/>
    </location>
    <ligand>
        <name>substrate</name>
    </ligand>
</feature>
<feature type="binding site" evidence="1">
    <location>
        <begin position="82"/>
        <end position="83"/>
    </location>
    <ligand>
        <name>NADPH</name>
        <dbReference type="ChEBI" id="CHEBI:57783"/>
    </ligand>
</feature>
<feature type="binding site" evidence="1">
    <location>
        <begin position="219"/>
        <end position="220"/>
    </location>
    <ligand>
        <name>substrate</name>
    </ligand>
</feature>
<feature type="binding site" evidence="1">
    <location>
        <begin position="248"/>
        <end position="249"/>
    </location>
    <ligand>
        <name>NADPH</name>
        <dbReference type="ChEBI" id="CHEBI:57783"/>
    </ligand>
</feature>
<proteinExistence type="inferred from homology"/>